<name>GPR12_HUMAN</name>
<dbReference type="EMBL" id="U18548">
    <property type="protein sequence ID" value="AAA91630.1"/>
    <property type="molecule type" value="Genomic_DNA"/>
</dbReference>
<dbReference type="EMBL" id="AL159978">
    <property type="status" value="NOT_ANNOTATED_CDS"/>
    <property type="molecule type" value="Genomic_DNA"/>
</dbReference>
<dbReference type="EMBL" id="BC067448">
    <property type="protein sequence ID" value="AAH67448.1"/>
    <property type="molecule type" value="mRNA"/>
</dbReference>
<dbReference type="EMBL" id="BC067452">
    <property type="protein sequence ID" value="AAH67452.1"/>
    <property type="molecule type" value="mRNA"/>
</dbReference>
<dbReference type="EMBL" id="BC112144">
    <property type="protein sequence ID" value="AAI12145.1"/>
    <property type="molecule type" value="mRNA"/>
</dbReference>
<dbReference type="EMBL" id="BC112146">
    <property type="protein sequence ID" value="AAI12147.1"/>
    <property type="molecule type" value="mRNA"/>
</dbReference>
<dbReference type="CCDS" id="CCDS9319.1"/>
<dbReference type="RefSeq" id="NP_005279.1">
    <property type="nucleotide sequence ID" value="NM_005288.4"/>
</dbReference>
<dbReference type="PDB" id="7Y3G">
    <property type="method" value="EM"/>
    <property type="resolution" value="2.77 A"/>
    <property type="chains" value="R=1-334"/>
</dbReference>
<dbReference type="PDBsum" id="7Y3G"/>
<dbReference type="EMDB" id="EMD-33594"/>
<dbReference type="SMR" id="P47775"/>
<dbReference type="BioGRID" id="109096">
    <property type="interactions" value="109"/>
</dbReference>
<dbReference type="FunCoup" id="P47775">
    <property type="interactions" value="340"/>
</dbReference>
<dbReference type="IntAct" id="P47775">
    <property type="interactions" value="92"/>
</dbReference>
<dbReference type="STRING" id="9606.ENSP00000384932"/>
<dbReference type="ChEMBL" id="CHEMBL5006"/>
<dbReference type="DrugBank" id="DB09061">
    <property type="generic name" value="Cannabidiol"/>
</dbReference>
<dbReference type="DrugBank" id="DB14009">
    <property type="generic name" value="Medical Cannabis"/>
</dbReference>
<dbReference type="DrugBank" id="DB14011">
    <property type="generic name" value="Nabiximols"/>
</dbReference>
<dbReference type="GuidetoPHARMACOLOGY" id="86"/>
<dbReference type="GlyCosmos" id="P47775">
    <property type="glycosylation" value="2 sites, No reported glycans"/>
</dbReference>
<dbReference type="GlyGen" id="P47775">
    <property type="glycosylation" value="2 sites"/>
</dbReference>
<dbReference type="iPTMnet" id="P47775"/>
<dbReference type="PhosphoSitePlus" id="P47775"/>
<dbReference type="BioMuta" id="GPR12"/>
<dbReference type="DMDM" id="1346168"/>
<dbReference type="MassIVE" id="P47775"/>
<dbReference type="PaxDb" id="9606-ENSP00000384932"/>
<dbReference type="PeptideAtlas" id="P47775"/>
<dbReference type="Antibodypedia" id="7292">
    <property type="antibodies" value="286 antibodies from 31 providers"/>
</dbReference>
<dbReference type="DNASU" id="2835"/>
<dbReference type="Ensembl" id="ENST00000381436.2">
    <property type="protein sequence ID" value="ENSP00000370844.2"/>
    <property type="gene ID" value="ENSG00000132975.8"/>
</dbReference>
<dbReference type="Ensembl" id="ENST00000405846.5">
    <property type="protein sequence ID" value="ENSP00000384932.3"/>
    <property type="gene ID" value="ENSG00000132975.8"/>
</dbReference>
<dbReference type="GeneID" id="2835"/>
<dbReference type="KEGG" id="hsa:2835"/>
<dbReference type="MANE-Select" id="ENST00000405846.5">
    <property type="protein sequence ID" value="ENSP00000384932.3"/>
    <property type="RefSeq nucleotide sequence ID" value="NM_005288.4"/>
    <property type="RefSeq protein sequence ID" value="NP_005279.1"/>
</dbReference>
<dbReference type="UCSC" id="uc010aal.5">
    <property type="organism name" value="human"/>
</dbReference>
<dbReference type="AGR" id="HGNC:4466"/>
<dbReference type="CTD" id="2835"/>
<dbReference type="DisGeNET" id="2835"/>
<dbReference type="GeneCards" id="GPR12"/>
<dbReference type="HGNC" id="HGNC:4466">
    <property type="gene designation" value="GPR12"/>
</dbReference>
<dbReference type="HPA" id="ENSG00000132975">
    <property type="expression patterns" value="Tissue enhanced (brain, retina, skin)"/>
</dbReference>
<dbReference type="MIM" id="600752">
    <property type="type" value="gene"/>
</dbReference>
<dbReference type="neXtProt" id="NX_P47775"/>
<dbReference type="OpenTargets" id="ENSG00000132975"/>
<dbReference type="PharmGKB" id="PA28856"/>
<dbReference type="VEuPathDB" id="HostDB:ENSG00000132975"/>
<dbReference type="eggNOG" id="KOG3656">
    <property type="taxonomic scope" value="Eukaryota"/>
</dbReference>
<dbReference type="GeneTree" id="ENSGT01110000267224"/>
<dbReference type="HOGENOM" id="CLU_065071_0_0_1"/>
<dbReference type="InParanoid" id="P47775"/>
<dbReference type="OMA" id="ELIVNPW"/>
<dbReference type="OrthoDB" id="10042731at2759"/>
<dbReference type="PAN-GO" id="P47775">
    <property type="GO annotations" value="5 GO annotations based on evolutionary models"/>
</dbReference>
<dbReference type="PhylomeDB" id="P47775"/>
<dbReference type="TreeFam" id="TF330052"/>
<dbReference type="PathwayCommons" id="P47775"/>
<dbReference type="SignaLink" id="P47775"/>
<dbReference type="BioGRID-ORCS" id="2835">
    <property type="hits" value="14 hits in 1143 CRISPR screens"/>
</dbReference>
<dbReference type="GeneWiki" id="GPR12"/>
<dbReference type="GenomeRNAi" id="2835"/>
<dbReference type="Pharos" id="P47775">
    <property type="development level" value="Tbio"/>
</dbReference>
<dbReference type="PRO" id="PR:P47775"/>
<dbReference type="Proteomes" id="UP000005640">
    <property type="component" value="Chromosome 13"/>
</dbReference>
<dbReference type="RNAct" id="P47775">
    <property type="molecule type" value="protein"/>
</dbReference>
<dbReference type="Bgee" id="ENSG00000132975">
    <property type="expression patterns" value="Expressed in cortical plate and 76 other cell types or tissues"/>
</dbReference>
<dbReference type="ExpressionAtlas" id="P47775">
    <property type="expression patterns" value="baseline and differential"/>
</dbReference>
<dbReference type="GO" id="GO:0005737">
    <property type="term" value="C:cytoplasm"/>
    <property type="evidence" value="ECO:0000318"/>
    <property type="project" value="GO_Central"/>
</dbReference>
<dbReference type="GO" id="GO:0005886">
    <property type="term" value="C:plasma membrane"/>
    <property type="evidence" value="ECO:0000318"/>
    <property type="project" value="GO_Central"/>
</dbReference>
<dbReference type="GO" id="GO:0004930">
    <property type="term" value="F:G protein-coupled receptor activity"/>
    <property type="evidence" value="ECO:0000318"/>
    <property type="project" value="GO_Central"/>
</dbReference>
<dbReference type="GO" id="GO:0031210">
    <property type="term" value="F:phosphatidylcholine binding"/>
    <property type="evidence" value="ECO:0007669"/>
    <property type="project" value="Ensembl"/>
</dbReference>
<dbReference type="GO" id="GO:0007189">
    <property type="term" value="P:adenylate cyclase-activating G protein-coupled receptor signaling pathway"/>
    <property type="evidence" value="ECO:0000318"/>
    <property type="project" value="GO_Central"/>
</dbReference>
<dbReference type="GO" id="GO:0007186">
    <property type="term" value="P:G protein-coupled receptor signaling pathway"/>
    <property type="evidence" value="ECO:0000304"/>
    <property type="project" value="ProtInc"/>
</dbReference>
<dbReference type="GO" id="GO:0006874">
    <property type="term" value="P:intracellular calcium ion homeostasis"/>
    <property type="evidence" value="ECO:0007669"/>
    <property type="project" value="Ensembl"/>
</dbReference>
<dbReference type="GO" id="GO:0019222">
    <property type="term" value="P:regulation of metabolic process"/>
    <property type="evidence" value="ECO:0000318"/>
    <property type="project" value="GO_Central"/>
</dbReference>
<dbReference type="CDD" id="cd15961">
    <property type="entry name" value="7tmA_GPR12"/>
    <property type="match status" value="1"/>
</dbReference>
<dbReference type="FunFam" id="1.20.1070.10:FF:000067">
    <property type="entry name" value="G-protein coupled receptor 12"/>
    <property type="match status" value="1"/>
</dbReference>
<dbReference type="Gene3D" id="1.20.1070.10">
    <property type="entry name" value="Rhodopsin 7-helix transmembrane proteins"/>
    <property type="match status" value="1"/>
</dbReference>
<dbReference type="InterPro" id="IPR000276">
    <property type="entry name" value="GPCR_Rhodpsn"/>
</dbReference>
<dbReference type="InterPro" id="IPR017452">
    <property type="entry name" value="GPCR_Rhodpsn_7TM"/>
</dbReference>
<dbReference type="InterPro" id="IPR000599">
    <property type="entry name" value="GPR12"/>
</dbReference>
<dbReference type="InterPro" id="IPR000723">
    <property type="entry name" value="GPR_3/6/12_orphan"/>
</dbReference>
<dbReference type="PANTHER" id="PTHR22750">
    <property type="entry name" value="G-PROTEIN COUPLED RECEPTOR"/>
    <property type="match status" value="1"/>
</dbReference>
<dbReference type="Pfam" id="PF00001">
    <property type="entry name" value="7tm_1"/>
    <property type="match status" value="1"/>
</dbReference>
<dbReference type="PRINTS" id="PR00237">
    <property type="entry name" value="GPCRRHODOPSN"/>
</dbReference>
<dbReference type="PRINTS" id="PR00650">
    <property type="entry name" value="GPR12ORPHANR"/>
</dbReference>
<dbReference type="PRINTS" id="PR00644">
    <property type="entry name" value="GPRORPHANR"/>
</dbReference>
<dbReference type="SMART" id="SM01381">
    <property type="entry name" value="7TM_GPCR_Srsx"/>
    <property type="match status" value="1"/>
</dbReference>
<dbReference type="SUPFAM" id="SSF81321">
    <property type="entry name" value="Family A G protein-coupled receptor-like"/>
    <property type="match status" value="1"/>
</dbReference>
<dbReference type="PROSITE" id="PS00237">
    <property type="entry name" value="G_PROTEIN_RECEP_F1_1"/>
    <property type="match status" value="1"/>
</dbReference>
<dbReference type="PROSITE" id="PS50262">
    <property type="entry name" value="G_PROTEIN_RECEP_F1_2"/>
    <property type="match status" value="1"/>
</dbReference>
<evidence type="ECO:0000250" key="1"/>
<evidence type="ECO:0000255" key="2"/>
<evidence type="ECO:0000255" key="3">
    <source>
        <dbReference type="PROSITE-ProRule" id="PRU00521"/>
    </source>
</evidence>
<evidence type="ECO:0000305" key="4"/>
<evidence type="ECO:0000305" key="5">
    <source>
    </source>
</evidence>
<evidence type="ECO:0000305" key="6">
    <source>
    </source>
</evidence>
<evidence type="ECO:0007829" key="7">
    <source>
        <dbReference type="PDB" id="7Y3G"/>
    </source>
</evidence>
<organism>
    <name type="scientific">Homo sapiens</name>
    <name type="common">Human</name>
    <dbReference type="NCBI Taxonomy" id="9606"/>
    <lineage>
        <taxon>Eukaryota</taxon>
        <taxon>Metazoa</taxon>
        <taxon>Chordata</taxon>
        <taxon>Craniata</taxon>
        <taxon>Vertebrata</taxon>
        <taxon>Euteleostomi</taxon>
        <taxon>Mammalia</taxon>
        <taxon>Eutheria</taxon>
        <taxon>Euarchontoglires</taxon>
        <taxon>Primates</taxon>
        <taxon>Haplorrhini</taxon>
        <taxon>Catarrhini</taxon>
        <taxon>Hominidae</taxon>
        <taxon>Homo</taxon>
    </lineage>
</organism>
<protein>
    <recommendedName>
        <fullName>G-protein coupled receptor 12</fullName>
    </recommendedName>
</protein>
<proteinExistence type="evidence at protein level"/>
<sequence>MNEDLKVNLSGLPRDYLDAAAAENISAAVSSRVPAVEPEPELVVNPWDIVLCTSGTLISCENAIVVLIIFHNPSLRAPMFLLIGSLALADLLAGIGLITNFVFAYLLQSEATKLVTIGLIVASFSASVCSLLAITVDRYLSLYYALTYHSERTVTFTYVMLVMLWGTSICLGLLPVMGWNCLRDESTCSVVRPLTKNNAAILSVSFLFMFALMLQLYIQICKIVMRHAHQIALQHHFLATSHYVTTRKGVSTLAIILGTFAACWMPFTLYSLIADYTYPSIYTYATLLPATYNSIINPVIYAFRNQEIQKALCLICCGCIPSSLAQRARSPSDV</sequence>
<comment type="function">
    <text evidence="1">Promotes neurite outgrowth and blocks myelin inhibition in neurons (By similarity). Receptor with constitutive G(s) signaling activity that stimulates cyclic AMP production.</text>
</comment>
<comment type="subcellular location">
    <subcellularLocation>
        <location evidence="4">Cell membrane</location>
        <topology evidence="4">Multi-pass membrane protein</topology>
    </subcellularLocation>
</comment>
<comment type="similarity">
    <text evidence="3">Belongs to the G-protein coupled receptor 1 family.</text>
</comment>
<comment type="caution">
    <text evidence="5 6">Was originally (PubMed:12220620) thought to be a receptor for sphingosine 1-phosphate. It has been demonstrated that it is not the case in human (PubMed:19286662).</text>
</comment>
<accession>P47775</accession>
<accession>Q5T8P3</accession>
<keyword id="KW-0002">3D-structure</keyword>
<keyword id="KW-1003">Cell membrane</keyword>
<keyword id="KW-0297">G-protein coupled receptor</keyword>
<keyword id="KW-0325">Glycoprotein</keyword>
<keyword id="KW-0449">Lipoprotein</keyword>
<keyword id="KW-0472">Membrane</keyword>
<keyword id="KW-0564">Palmitate</keyword>
<keyword id="KW-0597">Phosphoprotein</keyword>
<keyword id="KW-0675">Receptor</keyword>
<keyword id="KW-1185">Reference proteome</keyword>
<keyword id="KW-0807">Transducer</keyword>
<keyword id="KW-0812">Transmembrane</keyword>
<keyword id="KW-1133">Transmembrane helix</keyword>
<feature type="chain" id="PRO_0000069527" description="G-protein coupled receptor 12">
    <location>
        <begin position="1"/>
        <end position="334"/>
    </location>
</feature>
<feature type="topological domain" description="Extracellular" evidence="2">
    <location>
        <begin position="1"/>
        <end position="48"/>
    </location>
</feature>
<feature type="transmembrane region" description="Helical; Name=1" evidence="2">
    <location>
        <begin position="49"/>
        <end position="69"/>
    </location>
</feature>
<feature type="topological domain" description="Cytoplasmic" evidence="2">
    <location>
        <begin position="70"/>
        <end position="77"/>
    </location>
</feature>
<feature type="transmembrane region" description="Helical; Name=2" evidence="2">
    <location>
        <begin position="78"/>
        <end position="98"/>
    </location>
</feature>
<feature type="topological domain" description="Extracellular" evidence="2">
    <location>
        <begin position="99"/>
        <end position="113"/>
    </location>
</feature>
<feature type="transmembrane region" description="Helical; Name=3" evidence="2">
    <location>
        <begin position="114"/>
        <end position="134"/>
    </location>
</feature>
<feature type="topological domain" description="Cytoplasmic" evidence="2">
    <location>
        <begin position="135"/>
        <end position="158"/>
    </location>
</feature>
<feature type="transmembrane region" description="Helical; Name=4" evidence="2">
    <location>
        <begin position="159"/>
        <end position="179"/>
    </location>
</feature>
<feature type="topological domain" description="Extracellular" evidence="2">
    <location>
        <begin position="180"/>
        <end position="199"/>
    </location>
</feature>
<feature type="transmembrane region" description="Helical; Name=5" evidence="2">
    <location>
        <begin position="200"/>
        <end position="220"/>
    </location>
</feature>
<feature type="topological domain" description="Cytoplasmic" evidence="2">
    <location>
        <begin position="221"/>
        <end position="252"/>
    </location>
</feature>
<feature type="transmembrane region" description="Helical; Name=6" evidence="2">
    <location>
        <begin position="253"/>
        <end position="273"/>
    </location>
</feature>
<feature type="topological domain" description="Extracellular" evidence="2">
    <location>
        <begin position="274"/>
        <end position="282"/>
    </location>
</feature>
<feature type="transmembrane region" description="Helical; Name=7" evidence="2">
    <location>
        <begin position="283"/>
        <end position="303"/>
    </location>
</feature>
<feature type="topological domain" description="Cytoplasmic" evidence="2">
    <location>
        <begin position="304"/>
        <end position="334"/>
    </location>
</feature>
<feature type="modified residue" description="Phosphoserine" evidence="2">
    <location>
        <position position="330"/>
    </location>
</feature>
<feature type="modified residue" description="Phosphoserine" evidence="2">
    <location>
        <position position="332"/>
    </location>
</feature>
<feature type="lipid moiety-binding region" description="S-palmitoyl cysteine" evidence="1">
    <location>
        <position position="317"/>
    </location>
</feature>
<feature type="glycosylation site" description="N-linked (GlcNAc...) asparagine" evidence="2">
    <location>
        <position position="8"/>
    </location>
</feature>
<feature type="glycosylation site" description="N-linked (GlcNAc...) asparagine" evidence="2">
    <location>
        <position position="24"/>
    </location>
</feature>
<feature type="helix" evidence="7">
    <location>
        <begin position="46"/>
        <end position="71"/>
    </location>
</feature>
<feature type="helix" evidence="7">
    <location>
        <begin position="78"/>
        <end position="102"/>
    </location>
</feature>
<feature type="helix" evidence="7">
    <location>
        <begin position="114"/>
        <end position="143"/>
    </location>
</feature>
<feature type="helix" evidence="7">
    <location>
        <begin position="145"/>
        <end position="147"/>
    </location>
</feature>
<feature type="strand" evidence="7">
    <location>
        <begin position="149"/>
        <end position="153"/>
    </location>
</feature>
<feature type="helix" evidence="7">
    <location>
        <begin position="154"/>
        <end position="173"/>
    </location>
</feature>
<feature type="helix" evidence="7">
    <location>
        <begin position="174"/>
        <end position="176"/>
    </location>
</feature>
<feature type="helix" evidence="7">
    <location>
        <begin position="181"/>
        <end position="183"/>
    </location>
</feature>
<feature type="strand" evidence="7">
    <location>
        <begin position="188"/>
        <end position="194"/>
    </location>
</feature>
<feature type="helix" evidence="7">
    <location>
        <begin position="195"/>
        <end position="205"/>
    </location>
</feature>
<feature type="turn" evidence="7">
    <location>
        <begin position="206"/>
        <end position="209"/>
    </location>
</feature>
<feature type="helix" evidence="7">
    <location>
        <begin position="210"/>
        <end position="235"/>
    </location>
</feature>
<feature type="helix" evidence="7">
    <location>
        <begin position="247"/>
        <end position="262"/>
    </location>
</feature>
<feature type="helix" evidence="7">
    <location>
        <begin position="265"/>
        <end position="271"/>
    </location>
</feature>
<feature type="helix" evidence="7">
    <location>
        <begin position="281"/>
        <end position="302"/>
    </location>
</feature>
<feature type="helix" evidence="7">
    <location>
        <begin position="306"/>
        <end position="310"/>
    </location>
</feature>
<reference key="1">
    <citation type="journal article" date="1995" name="Genomics">
        <title>Molecular cloning and chromosomal localization of human genes encoding three closely related G protein-coupled receptors.</title>
        <authorList>
            <person name="Song Z.-H."/>
            <person name="Modi W."/>
            <person name="Bonner T.I."/>
        </authorList>
    </citation>
    <scope>NUCLEOTIDE SEQUENCE [GENOMIC DNA]</scope>
</reference>
<reference key="2">
    <citation type="journal article" date="2004" name="Nature">
        <title>The DNA sequence and analysis of human chromosome 13.</title>
        <authorList>
            <person name="Dunham A."/>
            <person name="Matthews L.H."/>
            <person name="Burton J."/>
            <person name="Ashurst J.L."/>
            <person name="Howe K.L."/>
            <person name="Ashcroft K.J."/>
            <person name="Beare D.M."/>
            <person name="Burford D.C."/>
            <person name="Hunt S.E."/>
            <person name="Griffiths-Jones S."/>
            <person name="Jones M.C."/>
            <person name="Keenan S.J."/>
            <person name="Oliver K."/>
            <person name="Scott C.E."/>
            <person name="Ainscough R."/>
            <person name="Almeida J.P."/>
            <person name="Ambrose K.D."/>
            <person name="Andrews D.T."/>
            <person name="Ashwell R.I.S."/>
            <person name="Babbage A.K."/>
            <person name="Bagguley C.L."/>
            <person name="Bailey J."/>
            <person name="Bannerjee R."/>
            <person name="Barlow K.F."/>
            <person name="Bates K."/>
            <person name="Beasley H."/>
            <person name="Bird C.P."/>
            <person name="Bray-Allen S."/>
            <person name="Brown A.J."/>
            <person name="Brown J.Y."/>
            <person name="Burrill W."/>
            <person name="Carder C."/>
            <person name="Carter N.P."/>
            <person name="Chapman J.C."/>
            <person name="Clamp M.E."/>
            <person name="Clark S.Y."/>
            <person name="Clarke G."/>
            <person name="Clee C.M."/>
            <person name="Clegg S.C."/>
            <person name="Cobley V."/>
            <person name="Collins J.E."/>
            <person name="Corby N."/>
            <person name="Coville G.J."/>
            <person name="Deloukas P."/>
            <person name="Dhami P."/>
            <person name="Dunham I."/>
            <person name="Dunn M."/>
            <person name="Earthrowl M.E."/>
            <person name="Ellington A.G."/>
            <person name="Faulkner L."/>
            <person name="Frankish A.G."/>
            <person name="Frankland J."/>
            <person name="French L."/>
            <person name="Garner P."/>
            <person name="Garnett J."/>
            <person name="Gilbert J.G.R."/>
            <person name="Gilson C.J."/>
            <person name="Ghori J."/>
            <person name="Grafham D.V."/>
            <person name="Gribble S.M."/>
            <person name="Griffiths C."/>
            <person name="Hall R.E."/>
            <person name="Hammond S."/>
            <person name="Harley J.L."/>
            <person name="Hart E.A."/>
            <person name="Heath P.D."/>
            <person name="Howden P.J."/>
            <person name="Huckle E.J."/>
            <person name="Hunt P.J."/>
            <person name="Hunt A.R."/>
            <person name="Johnson C."/>
            <person name="Johnson D."/>
            <person name="Kay M."/>
            <person name="Kimberley A.M."/>
            <person name="King A."/>
            <person name="Laird G.K."/>
            <person name="Langford C.J."/>
            <person name="Lawlor S."/>
            <person name="Leongamornlert D.A."/>
            <person name="Lloyd D.M."/>
            <person name="Lloyd C."/>
            <person name="Loveland J.E."/>
            <person name="Lovell J."/>
            <person name="Martin S."/>
            <person name="Mashreghi-Mohammadi M."/>
            <person name="McLaren S.J."/>
            <person name="McMurray A."/>
            <person name="Milne S."/>
            <person name="Moore M.J.F."/>
            <person name="Nickerson T."/>
            <person name="Palmer S.A."/>
            <person name="Pearce A.V."/>
            <person name="Peck A.I."/>
            <person name="Pelan S."/>
            <person name="Phillimore B."/>
            <person name="Porter K.M."/>
            <person name="Rice C.M."/>
            <person name="Searle S."/>
            <person name="Sehra H.K."/>
            <person name="Shownkeen R."/>
            <person name="Skuce C.D."/>
            <person name="Smith M."/>
            <person name="Steward C.A."/>
            <person name="Sycamore N."/>
            <person name="Tester J."/>
            <person name="Thomas D.W."/>
            <person name="Tracey A."/>
            <person name="Tromans A."/>
            <person name="Tubby B."/>
            <person name="Wall M."/>
            <person name="Wallis J.M."/>
            <person name="West A.P."/>
            <person name="Whitehead S.L."/>
            <person name="Willey D.L."/>
            <person name="Wilming L."/>
            <person name="Wray P.W."/>
            <person name="Wright M.W."/>
            <person name="Young L."/>
            <person name="Coulson A."/>
            <person name="Durbin R.M."/>
            <person name="Hubbard T."/>
            <person name="Sulston J.E."/>
            <person name="Beck S."/>
            <person name="Bentley D.R."/>
            <person name="Rogers J."/>
            <person name="Ross M.T."/>
        </authorList>
    </citation>
    <scope>NUCLEOTIDE SEQUENCE [LARGE SCALE GENOMIC DNA]</scope>
</reference>
<reference key="3">
    <citation type="journal article" date="2004" name="Genome Res.">
        <title>The status, quality, and expansion of the NIH full-length cDNA project: the Mammalian Gene Collection (MGC).</title>
        <authorList>
            <consortium name="The MGC Project Team"/>
        </authorList>
    </citation>
    <scope>NUCLEOTIDE SEQUENCE [LARGE SCALE MRNA]</scope>
    <source>
        <tissue>Brain cortex</tissue>
    </source>
</reference>
<reference key="4">
    <citation type="journal article" date="2002" name="Cell. Signal.">
        <title>Sphingosine 1-phosphate is a ligand of the human gpr3, gpr6 and gpr12 family of constitutively active G protein-coupled receptors.</title>
        <authorList>
            <person name="Uhlenbrock K."/>
            <person name="Gassenhuber J."/>
            <person name="Kostenis E."/>
        </authorList>
    </citation>
    <scope>PRELIMINARY FUNCTION</scope>
</reference>
<reference key="5">
    <citation type="journal article" date="2009" name="J. Biol. Chem.">
        <title>Lipid G protein-coupled receptor ligand identification using beta-arrestin PathHunter assay.</title>
        <authorList>
            <person name="Yin H."/>
            <person name="Chu A."/>
            <person name="Li W."/>
            <person name="Wang B."/>
            <person name="Shelton F."/>
            <person name="Otero F."/>
            <person name="Nguyen D.G."/>
            <person name="Caldwell J.S."/>
            <person name="Chen Y.A."/>
        </authorList>
    </citation>
    <scope>LACK OF FUNCTION AS A SPHINGOSINE 1-PHOSPHATE RECEPTOR</scope>
</reference>
<gene>
    <name type="primary">GPR12</name>
</gene>